<sequence length="133" mass="15799">MTLPSGHPKSRLIKKFTALGPYIREGQCEDNRFFFDCLAVCVNVKPAPEKREFWGWWMELEAQEKRFTYRYQFGLFDKEGNWTAVPINETEVVERLEYTLREFHEKLRDLLISMELTLEPSDDFNDEPVKLSA</sequence>
<comment type="function">
    <text evidence="1">Binds to the sigma-S subunit of RNA polymerase, activating expression of sigma-S-regulated genes. Stimulates RNA polymerase holoenzyme formation and may bind to several other sigma factors, such as sigma-70 and sigma-32.</text>
</comment>
<comment type="subcellular location">
    <subcellularLocation>
        <location evidence="1">Cytoplasm</location>
    </subcellularLocation>
</comment>
<comment type="similarity">
    <text evidence="1">Belongs to the Crl family.</text>
</comment>
<gene>
    <name evidence="1" type="primary">crl</name>
    <name type="ordered locus">SCH_0320</name>
</gene>
<evidence type="ECO:0000255" key="1">
    <source>
        <dbReference type="HAMAP-Rule" id="MF_01178"/>
    </source>
</evidence>
<keyword id="KW-0010">Activator</keyword>
<keyword id="KW-0175">Coiled coil</keyword>
<keyword id="KW-0963">Cytoplasm</keyword>
<keyword id="KW-0804">Transcription</keyword>
<keyword id="KW-0805">Transcription regulation</keyword>
<reference key="1">
    <citation type="journal article" date="2005" name="Nucleic Acids Res.">
        <title>The genome sequence of Salmonella enterica serovar Choleraesuis, a highly invasive and resistant zoonotic pathogen.</title>
        <authorList>
            <person name="Chiu C.-H."/>
            <person name="Tang P."/>
            <person name="Chu C."/>
            <person name="Hu S."/>
            <person name="Bao Q."/>
            <person name="Yu J."/>
            <person name="Chou Y.-Y."/>
            <person name="Wang H.-S."/>
            <person name="Lee Y.-S."/>
        </authorList>
    </citation>
    <scope>NUCLEOTIDE SEQUENCE [LARGE SCALE GENOMIC DNA]</scope>
    <source>
        <strain>SC-B67</strain>
    </source>
</reference>
<organism>
    <name type="scientific">Salmonella choleraesuis (strain SC-B67)</name>
    <dbReference type="NCBI Taxonomy" id="321314"/>
    <lineage>
        <taxon>Bacteria</taxon>
        <taxon>Pseudomonadati</taxon>
        <taxon>Pseudomonadota</taxon>
        <taxon>Gammaproteobacteria</taxon>
        <taxon>Enterobacterales</taxon>
        <taxon>Enterobacteriaceae</taxon>
        <taxon>Salmonella</taxon>
    </lineage>
</organism>
<accession>Q57ST5</accession>
<feature type="chain" id="PRO_0000268901" description="Sigma factor-binding protein Crl">
    <location>
        <begin position="1"/>
        <end position="133"/>
    </location>
</feature>
<feature type="region of interest" description="Essential for activity" evidence="1">
    <location>
        <begin position="99"/>
        <end position="122"/>
    </location>
</feature>
<feature type="coiled-coil region" evidence="1">
    <location>
        <begin position="90"/>
        <end position="111"/>
    </location>
</feature>
<dbReference type="EMBL" id="AE017220">
    <property type="protein sequence ID" value="AAX64226.1"/>
    <property type="molecule type" value="Genomic_DNA"/>
</dbReference>
<dbReference type="RefSeq" id="WP_011264201.1">
    <property type="nucleotide sequence ID" value="NC_006905.1"/>
</dbReference>
<dbReference type="SMR" id="Q57ST5"/>
<dbReference type="KEGG" id="sec:SCH_0320"/>
<dbReference type="HOGENOM" id="CLU_136773_0_0_6"/>
<dbReference type="Proteomes" id="UP000000538">
    <property type="component" value="Chromosome"/>
</dbReference>
<dbReference type="GO" id="GO:0005737">
    <property type="term" value="C:cytoplasm"/>
    <property type="evidence" value="ECO:0007669"/>
    <property type="project" value="UniProtKB-SubCell"/>
</dbReference>
<dbReference type="GO" id="GO:0045893">
    <property type="term" value="P:positive regulation of DNA-templated transcription"/>
    <property type="evidence" value="ECO:0007669"/>
    <property type="project" value="UniProtKB-UniRule"/>
</dbReference>
<dbReference type="Gene3D" id="3.30.310.230">
    <property type="entry name" value="Sigma factor-binding protein Crl monomer"/>
    <property type="match status" value="1"/>
</dbReference>
<dbReference type="HAMAP" id="MF_01178">
    <property type="entry name" value="Crl"/>
    <property type="match status" value="1"/>
</dbReference>
<dbReference type="InterPro" id="IPR009986">
    <property type="entry name" value="Tscrpt_reg_Crl"/>
</dbReference>
<dbReference type="InterPro" id="IPR038208">
    <property type="entry name" value="Tscrpt_reg_Crl_sf"/>
</dbReference>
<dbReference type="NCBIfam" id="NF008217">
    <property type="entry name" value="PRK10984.1"/>
    <property type="match status" value="1"/>
</dbReference>
<dbReference type="Pfam" id="PF07417">
    <property type="entry name" value="Crl"/>
    <property type="match status" value="1"/>
</dbReference>
<protein>
    <recommendedName>
        <fullName evidence="1">Sigma factor-binding protein Crl</fullName>
    </recommendedName>
</protein>
<name>CRL_SALCH</name>
<proteinExistence type="inferred from homology"/>